<accession>P0DF47</accession>
<accession>Q79WD8</accession>
<accession>Q8K8H1</accession>
<organism>
    <name type="scientific">Streptococcus pyogenes serotype M3 (strain SSI-1)</name>
    <dbReference type="NCBI Taxonomy" id="193567"/>
    <lineage>
        <taxon>Bacteria</taxon>
        <taxon>Bacillati</taxon>
        <taxon>Bacillota</taxon>
        <taxon>Bacilli</taxon>
        <taxon>Lactobacillales</taxon>
        <taxon>Streptococcaceae</taxon>
        <taxon>Streptococcus</taxon>
    </lineage>
</organism>
<gene>
    <name evidence="1" type="primary">rsmI</name>
    <name type="ordered locus">SPs1565</name>
</gene>
<proteinExistence type="inferred from homology"/>
<reference key="1">
    <citation type="journal article" date="2003" name="Genome Res.">
        <title>Genome sequence of an M3 strain of Streptococcus pyogenes reveals a large-scale genomic rearrangement in invasive strains and new insights into phage evolution.</title>
        <authorList>
            <person name="Nakagawa I."/>
            <person name="Kurokawa K."/>
            <person name="Yamashita A."/>
            <person name="Nakata M."/>
            <person name="Tomiyasu Y."/>
            <person name="Okahashi N."/>
            <person name="Kawabata S."/>
            <person name="Yamazaki K."/>
            <person name="Shiba T."/>
            <person name="Yasunaga T."/>
            <person name="Hayashi H."/>
            <person name="Hattori M."/>
            <person name="Hamada S."/>
        </authorList>
    </citation>
    <scope>NUCLEOTIDE SEQUENCE [LARGE SCALE GENOMIC DNA]</scope>
    <source>
        <strain>SSI-1</strain>
    </source>
</reference>
<comment type="function">
    <text evidence="1">Catalyzes the 2'-O-methylation of the ribose of cytidine 1402 (C1402) in 16S rRNA.</text>
</comment>
<comment type="catalytic activity">
    <reaction evidence="1">
        <text>cytidine(1402) in 16S rRNA + S-adenosyl-L-methionine = 2'-O-methylcytidine(1402) in 16S rRNA + S-adenosyl-L-homocysteine + H(+)</text>
        <dbReference type="Rhea" id="RHEA:42924"/>
        <dbReference type="Rhea" id="RHEA-COMP:10285"/>
        <dbReference type="Rhea" id="RHEA-COMP:10286"/>
        <dbReference type="ChEBI" id="CHEBI:15378"/>
        <dbReference type="ChEBI" id="CHEBI:57856"/>
        <dbReference type="ChEBI" id="CHEBI:59789"/>
        <dbReference type="ChEBI" id="CHEBI:74495"/>
        <dbReference type="ChEBI" id="CHEBI:82748"/>
        <dbReference type="EC" id="2.1.1.198"/>
    </reaction>
</comment>
<comment type="subcellular location">
    <subcellularLocation>
        <location evidence="1">Cytoplasm</location>
    </subcellularLocation>
</comment>
<comment type="similarity">
    <text evidence="1">Belongs to the methyltransferase superfamily. RsmI family.</text>
</comment>
<feature type="chain" id="PRO_0000411563" description="Ribosomal RNA small subunit methyltransferase I">
    <location>
        <begin position="1"/>
        <end position="287"/>
    </location>
</feature>
<dbReference type="EC" id="2.1.1.198" evidence="1"/>
<dbReference type="EMBL" id="BA000034">
    <property type="protein sequence ID" value="BAC64660.1"/>
    <property type="molecule type" value="Genomic_DNA"/>
</dbReference>
<dbReference type="RefSeq" id="WP_011054222.1">
    <property type="nucleotide sequence ID" value="NC_004606.1"/>
</dbReference>
<dbReference type="SMR" id="P0DF47"/>
<dbReference type="KEGG" id="sps:SPs1565"/>
<dbReference type="HOGENOM" id="CLU_044779_1_0_9"/>
<dbReference type="GO" id="GO:0005737">
    <property type="term" value="C:cytoplasm"/>
    <property type="evidence" value="ECO:0007669"/>
    <property type="project" value="UniProtKB-SubCell"/>
</dbReference>
<dbReference type="GO" id="GO:0070677">
    <property type="term" value="F:rRNA (cytosine-2'-O-)-methyltransferase activity"/>
    <property type="evidence" value="ECO:0007669"/>
    <property type="project" value="UniProtKB-UniRule"/>
</dbReference>
<dbReference type="CDD" id="cd11648">
    <property type="entry name" value="RsmI"/>
    <property type="match status" value="1"/>
</dbReference>
<dbReference type="FunFam" id="3.30.950.10:FF:000002">
    <property type="entry name" value="Ribosomal RNA small subunit methyltransferase I"/>
    <property type="match status" value="1"/>
</dbReference>
<dbReference type="FunFam" id="3.40.1010.10:FF:000002">
    <property type="entry name" value="Ribosomal RNA small subunit methyltransferase I"/>
    <property type="match status" value="1"/>
</dbReference>
<dbReference type="Gene3D" id="3.40.1010.10">
    <property type="entry name" value="Cobalt-precorrin-4 Transmethylase, Domain 1"/>
    <property type="match status" value="1"/>
</dbReference>
<dbReference type="Gene3D" id="3.30.950.10">
    <property type="entry name" value="Methyltransferase, Cobalt-precorrin-4 Transmethylase, Domain 2"/>
    <property type="match status" value="1"/>
</dbReference>
<dbReference type="HAMAP" id="MF_01877">
    <property type="entry name" value="16SrRNA_methyltr_I"/>
    <property type="match status" value="1"/>
</dbReference>
<dbReference type="InterPro" id="IPR000878">
    <property type="entry name" value="4pyrrol_Mease"/>
</dbReference>
<dbReference type="InterPro" id="IPR035996">
    <property type="entry name" value="4pyrrol_Methylase_sf"/>
</dbReference>
<dbReference type="InterPro" id="IPR014777">
    <property type="entry name" value="4pyrrole_Mease_sub1"/>
</dbReference>
<dbReference type="InterPro" id="IPR014776">
    <property type="entry name" value="4pyrrole_Mease_sub2"/>
</dbReference>
<dbReference type="InterPro" id="IPR008189">
    <property type="entry name" value="rRNA_ssu_MeTfrase_I"/>
</dbReference>
<dbReference type="InterPro" id="IPR018063">
    <property type="entry name" value="SAM_MeTrfase_RsmI_CS"/>
</dbReference>
<dbReference type="NCBIfam" id="TIGR00096">
    <property type="entry name" value="16S rRNA (cytidine(1402)-2'-O)-methyltransferase"/>
    <property type="match status" value="1"/>
</dbReference>
<dbReference type="PANTHER" id="PTHR46111">
    <property type="entry name" value="RIBOSOMAL RNA SMALL SUBUNIT METHYLTRANSFERASE I"/>
    <property type="match status" value="1"/>
</dbReference>
<dbReference type="PANTHER" id="PTHR46111:SF1">
    <property type="entry name" value="RIBOSOMAL RNA SMALL SUBUNIT METHYLTRANSFERASE I"/>
    <property type="match status" value="1"/>
</dbReference>
<dbReference type="Pfam" id="PF00590">
    <property type="entry name" value="TP_methylase"/>
    <property type="match status" value="1"/>
</dbReference>
<dbReference type="PIRSF" id="PIRSF005917">
    <property type="entry name" value="MTase_YraL"/>
    <property type="match status" value="1"/>
</dbReference>
<dbReference type="SUPFAM" id="SSF53790">
    <property type="entry name" value="Tetrapyrrole methylase"/>
    <property type="match status" value="1"/>
</dbReference>
<dbReference type="PROSITE" id="PS01296">
    <property type="entry name" value="RSMI"/>
    <property type="match status" value="1"/>
</dbReference>
<protein>
    <recommendedName>
        <fullName evidence="1">Ribosomal RNA small subunit methyltransferase I</fullName>
        <ecNumber evidence="1">2.1.1.198</ecNumber>
    </recommendedName>
    <alternativeName>
        <fullName evidence="1">16S rRNA 2'-O-ribose C1402 methyltransferase</fullName>
    </alternativeName>
    <alternativeName>
        <fullName evidence="1">rRNA (cytidine-2'-O-)-methyltransferase RsmI</fullName>
    </alternativeName>
</protein>
<sequence>MQVQKSFKDKKTSGTLYLVPTPIGNLQDMTFRAVATLKEVDFICAEDTRNTGLLLKHFDIATKQISFHEHNAYEKIPDLIDLLISGRSLAQVSDAGMPSISDPGHDLVKAAIDSDITVVALPGASAGITALIASGLAPQPHVFYGFLPRKAGQQKAFFEDKHHYPETQMFYESPYRIKDTLTNMLACYGDRQVVLVRELTKLFEEYQRGSISEILSYLEETSLKGECLLIVAGAQVDSEVELTADVDLVSLVQKEIQAGAKPNQAIKTIAKAYQVNRQELYQQFHDL</sequence>
<evidence type="ECO:0000255" key="1">
    <source>
        <dbReference type="HAMAP-Rule" id="MF_01877"/>
    </source>
</evidence>
<name>RSMI_STRPQ</name>
<keyword id="KW-0963">Cytoplasm</keyword>
<keyword id="KW-0489">Methyltransferase</keyword>
<keyword id="KW-0698">rRNA processing</keyword>
<keyword id="KW-0949">S-adenosyl-L-methionine</keyword>
<keyword id="KW-0808">Transferase</keyword>